<reference key="1">
    <citation type="journal article" date="2006" name="BMC Genomics">
        <title>Complete plastid genome sequence of Daucus carota: implications for biotechnology and phylogeny of angiosperms.</title>
        <authorList>
            <person name="Ruhlman T."/>
            <person name="Lee S.-B."/>
            <person name="Jansen R.K."/>
            <person name="Hostetler J.B."/>
            <person name="Tallon L.J."/>
            <person name="Town C.D."/>
            <person name="Daniell H."/>
        </authorList>
    </citation>
    <scope>NUCLEOTIDE SEQUENCE [LARGE SCALE GENOMIC DNA]</scope>
    <source>
        <strain>cv. Danvers Half-long</strain>
    </source>
</reference>
<proteinExistence type="inferred from homology"/>
<feature type="chain" id="PRO_0000362828" description="NAD(P)H-quinone oxidoreductase subunit 3, chloroplastic">
    <location>
        <begin position="1"/>
        <end position="120"/>
    </location>
</feature>
<feature type="transmembrane region" description="Helical" evidence="1">
    <location>
        <begin position="9"/>
        <end position="29"/>
    </location>
</feature>
<feature type="transmembrane region" description="Helical" evidence="1">
    <location>
        <begin position="64"/>
        <end position="84"/>
    </location>
</feature>
<feature type="transmembrane region" description="Helical" evidence="1">
    <location>
        <begin position="88"/>
        <end position="108"/>
    </location>
</feature>
<dbReference type="EC" id="7.1.1.-" evidence="1"/>
<dbReference type="EMBL" id="DQ898156">
    <property type="protein sequence ID" value="ABI32429.1"/>
    <property type="molecule type" value="Genomic_DNA"/>
</dbReference>
<dbReference type="RefSeq" id="YP_740122.1">
    <property type="nucleotide sequence ID" value="NC_008325.1"/>
</dbReference>
<dbReference type="SMR" id="Q0G9V7"/>
<dbReference type="GeneID" id="4266745"/>
<dbReference type="OMA" id="YVYAFLY"/>
<dbReference type="GO" id="GO:0009535">
    <property type="term" value="C:chloroplast thylakoid membrane"/>
    <property type="evidence" value="ECO:0007669"/>
    <property type="project" value="UniProtKB-SubCell"/>
</dbReference>
<dbReference type="GO" id="GO:0030964">
    <property type="term" value="C:NADH dehydrogenase complex"/>
    <property type="evidence" value="ECO:0007669"/>
    <property type="project" value="TreeGrafter"/>
</dbReference>
<dbReference type="GO" id="GO:0008137">
    <property type="term" value="F:NADH dehydrogenase (ubiquinone) activity"/>
    <property type="evidence" value="ECO:0007669"/>
    <property type="project" value="InterPro"/>
</dbReference>
<dbReference type="GO" id="GO:0048038">
    <property type="term" value="F:quinone binding"/>
    <property type="evidence" value="ECO:0007669"/>
    <property type="project" value="UniProtKB-KW"/>
</dbReference>
<dbReference type="GO" id="GO:0019684">
    <property type="term" value="P:photosynthesis, light reaction"/>
    <property type="evidence" value="ECO:0007669"/>
    <property type="project" value="UniProtKB-UniRule"/>
</dbReference>
<dbReference type="FunFam" id="1.20.58.1610:FF:000001">
    <property type="entry name" value="NAD(P)H-quinone oxidoreductase subunit 3, chloroplastic"/>
    <property type="match status" value="1"/>
</dbReference>
<dbReference type="Gene3D" id="1.20.58.1610">
    <property type="entry name" value="NADH:ubiquinone/plastoquinone oxidoreductase, chain 3"/>
    <property type="match status" value="1"/>
</dbReference>
<dbReference type="HAMAP" id="MF_01394">
    <property type="entry name" value="NDH1_NuoA"/>
    <property type="match status" value="1"/>
</dbReference>
<dbReference type="InterPro" id="IPR023043">
    <property type="entry name" value="NAD(P)H_OxRDtase_bac/plastid"/>
</dbReference>
<dbReference type="InterPro" id="IPR000440">
    <property type="entry name" value="NADH_UbQ/plastoQ_OxRdtase_su3"/>
</dbReference>
<dbReference type="InterPro" id="IPR038430">
    <property type="entry name" value="NDAH_ubi_oxred_su3_sf"/>
</dbReference>
<dbReference type="PANTHER" id="PTHR11058">
    <property type="entry name" value="NADH-UBIQUINONE OXIDOREDUCTASE CHAIN 3"/>
    <property type="match status" value="1"/>
</dbReference>
<dbReference type="PANTHER" id="PTHR11058:SF9">
    <property type="entry name" value="NADH-UBIQUINONE OXIDOREDUCTASE CHAIN 3"/>
    <property type="match status" value="1"/>
</dbReference>
<dbReference type="Pfam" id="PF00507">
    <property type="entry name" value="Oxidored_q4"/>
    <property type="match status" value="1"/>
</dbReference>
<protein>
    <recommendedName>
        <fullName evidence="1">NAD(P)H-quinone oxidoreductase subunit 3, chloroplastic</fullName>
        <ecNumber evidence="1">7.1.1.-</ecNumber>
    </recommendedName>
    <alternativeName>
        <fullName evidence="1">NAD(P)H dehydrogenase subunit 3</fullName>
    </alternativeName>
    <alternativeName>
        <fullName evidence="1">NADH-plastoquinone oxidoreductase subunit 3</fullName>
    </alternativeName>
</protein>
<name>NU3C_DAUCA</name>
<gene>
    <name evidence="1" type="primary">ndhC</name>
</gene>
<keyword id="KW-0150">Chloroplast</keyword>
<keyword id="KW-0472">Membrane</keyword>
<keyword id="KW-0520">NAD</keyword>
<keyword id="KW-0521">NADP</keyword>
<keyword id="KW-0934">Plastid</keyword>
<keyword id="KW-0618">Plastoquinone</keyword>
<keyword id="KW-0874">Quinone</keyword>
<keyword id="KW-0793">Thylakoid</keyword>
<keyword id="KW-1278">Translocase</keyword>
<keyword id="KW-0812">Transmembrane</keyword>
<keyword id="KW-1133">Transmembrane helix</keyword>
<keyword id="KW-0813">Transport</keyword>
<organism>
    <name type="scientific">Daucus carota</name>
    <name type="common">Wild carrot</name>
    <dbReference type="NCBI Taxonomy" id="4039"/>
    <lineage>
        <taxon>Eukaryota</taxon>
        <taxon>Viridiplantae</taxon>
        <taxon>Streptophyta</taxon>
        <taxon>Embryophyta</taxon>
        <taxon>Tracheophyta</taxon>
        <taxon>Spermatophyta</taxon>
        <taxon>Magnoliopsida</taxon>
        <taxon>eudicotyledons</taxon>
        <taxon>Gunneridae</taxon>
        <taxon>Pentapetalae</taxon>
        <taxon>asterids</taxon>
        <taxon>campanulids</taxon>
        <taxon>Apiales</taxon>
        <taxon>Apiaceae</taxon>
        <taxon>Apioideae</taxon>
        <taxon>Scandiceae</taxon>
        <taxon>Daucinae</taxon>
        <taxon>Daucus</taxon>
        <taxon>Daucus sect. Daucus</taxon>
    </lineage>
</organism>
<comment type="function">
    <text evidence="1">NDH shuttles electrons from NAD(P)H:plastoquinone, via FMN and iron-sulfur (Fe-S) centers, to quinones in the photosynthetic chain and possibly in a chloroplast respiratory chain. The immediate electron acceptor for the enzyme in this species is believed to be plastoquinone. Couples the redox reaction to proton translocation, and thus conserves the redox energy in a proton gradient.</text>
</comment>
<comment type="catalytic activity">
    <reaction evidence="1">
        <text>a plastoquinone + NADH + (n+1) H(+)(in) = a plastoquinol + NAD(+) + n H(+)(out)</text>
        <dbReference type="Rhea" id="RHEA:42608"/>
        <dbReference type="Rhea" id="RHEA-COMP:9561"/>
        <dbReference type="Rhea" id="RHEA-COMP:9562"/>
        <dbReference type="ChEBI" id="CHEBI:15378"/>
        <dbReference type="ChEBI" id="CHEBI:17757"/>
        <dbReference type="ChEBI" id="CHEBI:57540"/>
        <dbReference type="ChEBI" id="CHEBI:57945"/>
        <dbReference type="ChEBI" id="CHEBI:62192"/>
    </reaction>
</comment>
<comment type="catalytic activity">
    <reaction evidence="1">
        <text>a plastoquinone + NADPH + (n+1) H(+)(in) = a plastoquinol + NADP(+) + n H(+)(out)</text>
        <dbReference type="Rhea" id="RHEA:42612"/>
        <dbReference type="Rhea" id="RHEA-COMP:9561"/>
        <dbReference type="Rhea" id="RHEA-COMP:9562"/>
        <dbReference type="ChEBI" id="CHEBI:15378"/>
        <dbReference type="ChEBI" id="CHEBI:17757"/>
        <dbReference type="ChEBI" id="CHEBI:57783"/>
        <dbReference type="ChEBI" id="CHEBI:58349"/>
        <dbReference type="ChEBI" id="CHEBI:62192"/>
    </reaction>
</comment>
<comment type="subunit">
    <text evidence="1">NDH is composed of at least 16 different subunits, 5 of which are encoded in the nucleus.</text>
</comment>
<comment type="subcellular location">
    <subcellularLocation>
        <location evidence="1">Plastid</location>
        <location evidence="1">Chloroplast thylakoid membrane</location>
        <topology evidence="1">Multi-pass membrane protein</topology>
    </subcellularLocation>
</comment>
<comment type="similarity">
    <text evidence="1">Belongs to the complex I subunit 3 family.</text>
</comment>
<evidence type="ECO:0000255" key="1">
    <source>
        <dbReference type="HAMAP-Rule" id="MF_01394"/>
    </source>
</evidence>
<sequence>MFLLYEYDIFWAFLIISSLIPILAFFVSGVLAPINKGPEKLSSYESGIEPMGNAWLQFRIRYYMFALVFVVFDVETVFLYPWAMSFDVLGISVFVEALIFVLILIVGLVYAWRKGALEWS</sequence>
<accession>Q0G9V7</accession>
<geneLocation type="chloroplast"/>